<comment type="similarity">
    <text evidence="1">Belongs to the UPF0597 family.</text>
</comment>
<sequence length="446" mass="44950">MDIAAFFAAEVKPALGCTEPGAVALAAATAARHLPAPPERIHLRLSANIYKNGQSVGIPGAQGLRGNMLASALGALAGDADMGLQALAAVTADDVAAARALTERGAVTQEIVQDVPTVYAEAELYRPGHLVVAVVAGRHDRVAEVRHNGQVVYRAEDALGGDSLPPYMADLQRAAFGDLWNWADGIDADLARDLLRGAEMNLAVAEQGLANPWGLAVGHTLGMALRGGDCRNDSASDARAPGSCVPDACGPDISARVKATTAAAADVRMAGANQPVMSSAGSGNHGLTAIIPPALAARAWGRSDAELARALALSHLVTGAVKARTGRLTPLCGCAVAAGAGAAAALVRLADGTPAQAEQAVALVFSSVMGMICDGAKGGCALKVGTAAAEAWSAAQLALHGPGMTGAEGIVSPDFRASLRSLGEVSSLGFAAVDVAIIRLLERGVQ</sequence>
<gene>
    <name type="ordered locus">DvMF_1488</name>
</gene>
<proteinExistence type="inferred from homology"/>
<organism>
    <name type="scientific">Nitratidesulfovibrio vulgaris (strain DSM 19637 / Miyazaki F)</name>
    <name type="common">Desulfovibrio vulgaris</name>
    <dbReference type="NCBI Taxonomy" id="883"/>
    <lineage>
        <taxon>Bacteria</taxon>
        <taxon>Pseudomonadati</taxon>
        <taxon>Thermodesulfobacteriota</taxon>
        <taxon>Desulfovibrionia</taxon>
        <taxon>Desulfovibrionales</taxon>
        <taxon>Desulfovibrionaceae</taxon>
        <taxon>Nitratidesulfovibrio</taxon>
    </lineage>
</organism>
<feature type="chain" id="PRO_1000188449" description="UPF0597 protein DvMF_1488">
    <location>
        <begin position="1"/>
        <end position="446"/>
    </location>
</feature>
<dbReference type="EMBL" id="CP001197">
    <property type="protein sequence ID" value="ACL08436.1"/>
    <property type="molecule type" value="Genomic_DNA"/>
</dbReference>
<dbReference type="SMR" id="B8DLR0"/>
<dbReference type="STRING" id="883.DvMF_1488"/>
<dbReference type="KEGG" id="dvm:DvMF_1488"/>
<dbReference type="eggNOG" id="COG3681">
    <property type="taxonomic scope" value="Bacteria"/>
</dbReference>
<dbReference type="HOGENOM" id="CLU_051840_0_0_7"/>
<dbReference type="OrthoDB" id="41906at2"/>
<dbReference type="GO" id="GO:0080146">
    <property type="term" value="F:L-cysteine desulfhydrase activity"/>
    <property type="evidence" value="ECO:0007669"/>
    <property type="project" value="TreeGrafter"/>
</dbReference>
<dbReference type="GO" id="GO:0019450">
    <property type="term" value="P:L-cysteine catabolic process to pyruvate"/>
    <property type="evidence" value="ECO:0007669"/>
    <property type="project" value="TreeGrafter"/>
</dbReference>
<dbReference type="HAMAP" id="MF_01845">
    <property type="entry name" value="UPF0597"/>
    <property type="match status" value="1"/>
</dbReference>
<dbReference type="InterPro" id="IPR005130">
    <property type="entry name" value="Ser_deHydtase-like_asu"/>
</dbReference>
<dbReference type="InterPro" id="IPR021144">
    <property type="entry name" value="UPF0597"/>
</dbReference>
<dbReference type="PANTHER" id="PTHR30501">
    <property type="entry name" value="UPF0597 PROTEIN YHAM"/>
    <property type="match status" value="1"/>
</dbReference>
<dbReference type="PANTHER" id="PTHR30501:SF2">
    <property type="entry name" value="UPF0597 PROTEIN YHAM"/>
    <property type="match status" value="1"/>
</dbReference>
<dbReference type="Pfam" id="PF03313">
    <property type="entry name" value="SDH_alpha"/>
    <property type="match status" value="1"/>
</dbReference>
<dbReference type="PIRSF" id="PIRSF006054">
    <property type="entry name" value="UCP006054"/>
    <property type="match status" value="1"/>
</dbReference>
<evidence type="ECO:0000255" key="1">
    <source>
        <dbReference type="HAMAP-Rule" id="MF_01845"/>
    </source>
</evidence>
<protein>
    <recommendedName>
        <fullName evidence="1">UPF0597 protein DvMF_1488</fullName>
    </recommendedName>
</protein>
<accession>B8DLR0</accession>
<reference key="1">
    <citation type="submission" date="2008-10" db="EMBL/GenBank/DDBJ databases">
        <title>Complete sequence of Desulfovibrio vulgaris str. 'Miyazaki F'.</title>
        <authorList>
            <person name="Lucas S."/>
            <person name="Copeland A."/>
            <person name="Lapidus A."/>
            <person name="Glavina del Rio T."/>
            <person name="Dalin E."/>
            <person name="Tice H."/>
            <person name="Bruce D."/>
            <person name="Goodwin L."/>
            <person name="Pitluck S."/>
            <person name="Sims D."/>
            <person name="Brettin T."/>
            <person name="Detter J.C."/>
            <person name="Han C."/>
            <person name="Larimer F."/>
            <person name="Land M."/>
            <person name="Hauser L."/>
            <person name="Kyrpides N."/>
            <person name="Mikhailova N."/>
            <person name="Hazen T.C."/>
            <person name="Richardson P."/>
        </authorList>
    </citation>
    <scope>NUCLEOTIDE SEQUENCE [LARGE SCALE GENOMIC DNA]</scope>
    <source>
        <strain>DSM 19637 / Miyazaki F</strain>
    </source>
</reference>
<name>Y1488_NITV9</name>